<organism>
    <name type="scientific">Aromatoleum aromaticum (strain DSM 19018 / LMG 30748 / EbN1)</name>
    <name type="common">Azoarcus sp. (strain EbN1)</name>
    <dbReference type="NCBI Taxonomy" id="76114"/>
    <lineage>
        <taxon>Bacteria</taxon>
        <taxon>Pseudomonadati</taxon>
        <taxon>Pseudomonadota</taxon>
        <taxon>Betaproteobacteria</taxon>
        <taxon>Rhodocyclales</taxon>
        <taxon>Rhodocyclaceae</taxon>
        <taxon>Aromatoleum</taxon>
    </lineage>
</organism>
<reference key="1">
    <citation type="journal article" date="2005" name="Arch. Microbiol.">
        <title>The genome sequence of an anaerobic aromatic-degrading denitrifying bacterium, strain EbN1.</title>
        <authorList>
            <person name="Rabus R."/>
            <person name="Kube M."/>
            <person name="Heider J."/>
            <person name="Beck A."/>
            <person name="Heitmann K."/>
            <person name="Widdel F."/>
            <person name="Reinhardt R."/>
        </authorList>
    </citation>
    <scope>NUCLEOTIDE SEQUENCE [LARGE SCALE GENOMIC DNA]</scope>
    <source>
        <strain>DSM 19018 / LMG 30748 / EbN1</strain>
    </source>
</reference>
<sequence length="228" mass="24674">MSEATNEPVLACEGLSKTFREGADALQVLDGVTLAVARGERIAIVGASGSGKSTLLHLLGGLDVPSAGAVRLHGRDFSRMSDAERGRVRNEALGFVYQFHHLLPEFSALENVAMPLYIRRMEREAANERAVAMLKEVGLGHRLDHAPGELSGGERQRAAIARALVTQPACVLADEPTGNLDRRTAQSVFDLMLSLNERLATSFIIVTHDEQLAGRAQRTLRLDDGRLA</sequence>
<feature type="chain" id="PRO_0000272055" description="Lipoprotein-releasing system ATP-binding protein LolD">
    <location>
        <begin position="1"/>
        <end position="228"/>
    </location>
</feature>
<feature type="domain" description="ABC transporter" evidence="1">
    <location>
        <begin position="10"/>
        <end position="228"/>
    </location>
</feature>
<feature type="binding site" evidence="1">
    <location>
        <begin position="46"/>
        <end position="53"/>
    </location>
    <ligand>
        <name>ATP</name>
        <dbReference type="ChEBI" id="CHEBI:30616"/>
    </ligand>
</feature>
<proteinExistence type="inferred from homology"/>
<protein>
    <recommendedName>
        <fullName evidence="1">Lipoprotein-releasing system ATP-binding protein LolD</fullName>
        <ecNumber evidence="1">7.6.2.-</ecNumber>
    </recommendedName>
</protein>
<keyword id="KW-0067">ATP-binding</keyword>
<keyword id="KW-0997">Cell inner membrane</keyword>
<keyword id="KW-1003">Cell membrane</keyword>
<keyword id="KW-0472">Membrane</keyword>
<keyword id="KW-0547">Nucleotide-binding</keyword>
<keyword id="KW-1185">Reference proteome</keyword>
<keyword id="KW-1278">Translocase</keyword>
<keyword id="KW-0813">Transport</keyword>
<name>LOLD_AROAE</name>
<evidence type="ECO:0000255" key="1">
    <source>
        <dbReference type="HAMAP-Rule" id="MF_01708"/>
    </source>
</evidence>
<accession>Q5NZT6</accession>
<dbReference type="EC" id="7.6.2.-" evidence="1"/>
<dbReference type="EMBL" id="CR555306">
    <property type="protein sequence ID" value="CAI09428.1"/>
    <property type="molecule type" value="Genomic_DNA"/>
</dbReference>
<dbReference type="RefSeq" id="WP_011239091.1">
    <property type="nucleotide sequence ID" value="NC_006513.1"/>
</dbReference>
<dbReference type="SMR" id="Q5NZT6"/>
<dbReference type="STRING" id="76114.ebA5820"/>
<dbReference type="KEGG" id="eba:ebA5820"/>
<dbReference type="eggNOG" id="COG1136">
    <property type="taxonomic scope" value="Bacteria"/>
</dbReference>
<dbReference type="HOGENOM" id="CLU_000604_1_22_4"/>
<dbReference type="OrthoDB" id="9802264at2"/>
<dbReference type="Proteomes" id="UP000006552">
    <property type="component" value="Chromosome"/>
</dbReference>
<dbReference type="GO" id="GO:0005886">
    <property type="term" value="C:plasma membrane"/>
    <property type="evidence" value="ECO:0007669"/>
    <property type="project" value="UniProtKB-SubCell"/>
</dbReference>
<dbReference type="GO" id="GO:0005524">
    <property type="term" value="F:ATP binding"/>
    <property type="evidence" value="ECO:0007669"/>
    <property type="project" value="UniProtKB-KW"/>
</dbReference>
<dbReference type="GO" id="GO:0016887">
    <property type="term" value="F:ATP hydrolysis activity"/>
    <property type="evidence" value="ECO:0007669"/>
    <property type="project" value="InterPro"/>
</dbReference>
<dbReference type="GO" id="GO:0022857">
    <property type="term" value="F:transmembrane transporter activity"/>
    <property type="evidence" value="ECO:0007669"/>
    <property type="project" value="TreeGrafter"/>
</dbReference>
<dbReference type="GO" id="GO:0044874">
    <property type="term" value="P:lipoprotein localization to outer membrane"/>
    <property type="evidence" value="ECO:0007669"/>
    <property type="project" value="TreeGrafter"/>
</dbReference>
<dbReference type="GO" id="GO:0089705">
    <property type="term" value="P:protein localization to outer membrane"/>
    <property type="evidence" value="ECO:0007669"/>
    <property type="project" value="TreeGrafter"/>
</dbReference>
<dbReference type="CDD" id="cd03255">
    <property type="entry name" value="ABC_MJ0796_LolCDE_FtsE"/>
    <property type="match status" value="1"/>
</dbReference>
<dbReference type="FunFam" id="3.40.50.300:FF:000230">
    <property type="entry name" value="Lipoprotein-releasing system ATP-binding protein LolD"/>
    <property type="match status" value="1"/>
</dbReference>
<dbReference type="Gene3D" id="3.40.50.300">
    <property type="entry name" value="P-loop containing nucleotide triphosphate hydrolases"/>
    <property type="match status" value="1"/>
</dbReference>
<dbReference type="InterPro" id="IPR003593">
    <property type="entry name" value="AAA+_ATPase"/>
</dbReference>
<dbReference type="InterPro" id="IPR003439">
    <property type="entry name" value="ABC_transporter-like_ATP-bd"/>
</dbReference>
<dbReference type="InterPro" id="IPR017871">
    <property type="entry name" value="ABC_transporter-like_CS"/>
</dbReference>
<dbReference type="InterPro" id="IPR015854">
    <property type="entry name" value="ABC_transpr_LolD-like"/>
</dbReference>
<dbReference type="InterPro" id="IPR011924">
    <property type="entry name" value="LolD_lipo_ATP-bd"/>
</dbReference>
<dbReference type="InterPro" id="IPR017911">
    <property type="entry name" value="MacB-like_ATP-bd"/>
</dbReference>
<dbReference type="InterPro" id="IPR027417">
    <property type="entry name" value="P-loop_NTPase"/>
</dbReference>
<dbReference type="NCBIfam" id="TIGR02211">
    <property type="entry name" value="LolD_lipo_ex"/>
    <property type="match status" value="1"/>
</dbReference>
<dbReference type="PANTHER" id="PTHR24220">
    <property type="entry name" value="IMPORT ATP-BINDING PROTEIN"/>
    <property type="match status" value="1"/>
</dbReference>
<dbReference type="PANTHER" id="PTHR24220:SF689">
    <property type="entry name" value="LIPOPROTEIN-RELEASING SYSTEM ATP-BINDING PROTEIN LOLD"/>
    <property type="match status" value="1"/>
</dbReference>
<dbReference type="Pfam" id="PF00005">
    <property type="entry name" value="ABC_tran"/>
    <property type="match status" value="1"/>
</dbReference>
<dbReference type="SMART" id="SM00382">
    <property type="entry name" value="AAA"/>
    <property type="match status" value="1"/>
</dbReference>
<dbReference type="SUPFAM" id="SSF52540">
    <property type="entry name" value="P-loop containing nucleoside triphosphate hydrolases"/>
    <property type="match status" value="1"/>
</dbReference>
<dbReference type="PROSITE" id="PS00211">
    <property type="entry name" value="ABC_TRANSPORTER_1"/>
    <property type="match status" value="1"/>
</dbReference>
<dbReference type="PROSITE" id="PS50893">
    <property type="entry name" value="ABC_TRANSPORTER_2"/>
    <property type="match status" value="1"/>
</dbReference>
<dbReference type="PROSITE" id="PS51244">
    <property type="entry name" value="LOLD"/>
    <property type="match status" value="1"/>
</dbReference>
<gene>
    <name evidence="1" type="primary">lolD</name>
    <name type="ordered locus">AZOSEA33030</name>
    <name type="ORF">ebA5820</name>
</gene>
<comment type="function">
    <text evidence="1">Part of the ABC transporter complex LolCDE involved in the translocation of mature outer membrane-directed lipoproteins, from the inner membrane to the periplasmic chaperone, LolA. Responsible for the formation of the LolA-lipoprotein complex in an ATP-dependent manner.</text>
</comment>
<comment type="subunit">
    <text evidence="1">The complex is composed of two ATP-binding proteins (LolD) and two transmembrane proteins (LolC and LolE).</text>
</comment>
<comment type="subcellular location">
    <subcellularLocation>
        <location evidence="1">Cell inner membrane</location>
        <topology evidence="1">Peripheral membrane protein</topology>
    </subcellularLocation>
</comment>
<comment type="similarity">
    <text evidence="1">Belongs to the ABC transporter superfamily. Lipoprotein translocase (TC 3.A.1.125) family.</text>
</comment>